<dbReference type="EC" id="2.3.1.225" evidence="2"/>
<dbReference type="EMBL" id="BX649265">
    <property type="status" value="NOT_ANNOTATED_CDS"/>
    <property type="molecule type" value="Genomic_DNA"/>
</dbReference>
<dbReference type="EMBL" id="BC124360">
    <property type="protein sequence ID" value="AAI24361.1"/>
    <property type="molecule type" value="mRNA"/>
</dbReference>
<dbReference type="RefSeq" id="NP_001071031.1">
    <property type="nucleotide sequence ID" value="NM_001077563.1"/>
</dbReference>
<dbReference type="SMR" id="E7FH11"/>
<dbReference type="FunCoup" id="E7FH11">
    <property type="interactions" value="890"/>
</dbReference>
<dbReference type="STRING" id="7955.ENSDARP00000092660"/>
<dbReference type="Ensembl" id="ENSDART00000101885">
    <property type="protein sequence ID" value="ENSDARP00000092660"/>
    <property type="gene ID" value="ENSDARG00000069807"/>
</dbReference>
<dbReference type="Ensembl" id="ENSDART00000130540">
    <property type="protein sequence ID" value="ENSDARP00000112051"/>
    <property type="gene ID" value="ENSDARG00000069807"/>
</dbReference>
<dbReference type="GeneID" id="564062"/>
<dbReference type="KEGG" id="dre:564062"/>
<dbReference type="AGR" id="ZFIN:ZDB-GENE-060929-424"/>
<dbReference type="CTD" id="564062"/>
<dbReference type="ZFIN" id="ZDB-GENE-060929-424">
    <property type="gene designation" value="zdhhc18a"/>
</dbReference>
<dbReference type="HOGENOM" id="CLU_018741_0_0_1"/>
<dbReference type="InParanoid" id="E7FH11"/>
<dbReference type="OMA" id="WINILRH"/>
<dbReference type="OrthoDB" id="4096362at2759"/>
<dbReference type="TreeFam" id="TF312923"/>
<dbReference type="TreeFam" id="TF314515"/>
<dbReference type="PRO" id="PR:E7FH11"/>
<dbReference type="Proteomes" id="UP000000437">
    <property type="component" value="Chromosome 16"/>
</dbReference>
<dbReference type="Bgee" id="ENSDARG00000069807">
    <property type="expression patterns" value="Expressed in cleaving embryo and 24 other cell types or tissues"/>
</dbReference>
<dbReference type="GO" id="GO:0005783">
    <property type="term" value="C:endoplasmic reticulum"/>
    <property type="evidence" value="ECO:0000318"/>
    <property type="project" value="GO_Central"/>
</dbReference>
<dbReference type="GO" id="GO:0005794">
    <property type="term" value="C:Golgi apparatus"/>
    <property type="evidence" value="ECO:0000250"/>
    <property type="project" value="UniProtKB"/>
</dbReference>
<dbReference type="GO" id="GO:0000139">
    <property type="term" value="C:Golgi membrane"/>
    <property type="evidence" value="ECO:0007669"/>
    <property type="project" value="UniProtKB-SubCell"/>
</dbReference>
<dbReference type="GO" id="GO:0016409">
    <property type="term" value="F:palmitoyltransferase activity"/>
    <property type="evidence" value="ECO:0000250"/>
    <property type="project" value="UniProtKB"/>
</dbReference>
<dbReference type="GO" id="GO:0019706">
    <property type="term" value="F:protein-cysteine S-palmitoyltransferase activity"/>
    <property type="evidence" value="ECO:0000250"/>
    <property type="project" value="UniProtKB"/>
</dbReference>
<dbReference type="GO" id="GO:0045824">
    <property type="term" value="P:negative regulation of innate immune response"/>
    <property type="evidence" value="ECO:0000250"/>
    <property type="project" value="UniProtKB"/>
</dbReference>
<dbReference type="GO" id="GO:0006612">
    <property type="term" value="P:protein targeting to membrane"/>
    <property type="evidence" value="ECO:0000318"/>
    <property type="project" value="GO_Central"/>
</dbReference>
<dbReference type="InterPro" id="IPR001594">
    <property type="entry name" value="Palmitoyltrfase_DHHC"/>
</dbReference>
<dbReference type="InterPro" id="IPR039859">
    <property type="entry name" value="PFA4/ZDH16/20/ERF2-like"/>
</dbReference>
<dbReference type="PANTHER" id="PTHR22883:SF257">
    <property type="entry name" value="PALMITOYLTRANSFERASE ZDHHC18"/>
    <property type="match status" value="1"/>
</dbReference>
<dbReference type="PANTHER" id="PTHR22883">
    <property type="entry name" value="ZINC FINGER DHHC DOMAIN CONTAINING PROTEIN"/>
    <property type="match status" value="1"/>
</dbReference>
<dbReference type="Pfam" id="PF01529">
    <property type="entry name" value="DHHC"/>
    <property type="match status" value="1"/>
</dbReference>
<dbReference type="PROSITE" id="PS50216">
    <property type="entry name" value="DHHC"/>
    <property type="match status" value="1"/>
</dbReference>
<gene>
    <name evidence="6 9" type="primary">zdhhc18a</name>
    <name evidence="9" type="synonym">pigv</name>
</gene>
<name>ZD18A_DANRE</name>
<reference key="1">
    <citation type="journal article" date="2013" name="Nature">
        <title>The zebrafish reference genome sequence and its relationship to the human genome.</title>
        <authorList>
            <person name="Howe K."/>
            <person name="Clark M.D."/>
            <person name="Torroja C.F."/>
            <person name="Torrance J."/>
            <person name="Berthelot C."/>
            <person name="Muffato M."/>
            <person name="Collins J.E."/>
            <person name="Humphray S."/>
            <person name="McLaren K."/>
            <person name="Matthews L."/>
            <person name="McLaren S."/>
            <person name="Sealy I."/>
            <person name="Caccamo M."/>
            <person name="Churcher C."/>
            <person name="Scott C."/>
            <person name="Barrett J.C."/>
            <person name="Koch R."/>
            <person name="Rauch G.J."/>
            <person name="White S."/>
            <person name="Chow W."/>
            <person name="Kilian B."/>
            <person name="Quintais L.T."/>
            <person name="Guerra-Assuncao J.A."/>
            <person name="Zhou Y."/>
            <person name="Gu Y."/>
            <person name="Yen J."/>
            <person name="Vogel J.H."/>
            <person name="Eyre T."/>
            <person name="Redmond S."/>
            <person name="Banerjee R."/>
            <person name="Chi J."/>
            <person name="Fu B."/>
            <person name="Langley E."/>
            <person name="Maguire S.F."/>
            <person name="Laird G.K."/>
            <person name="Lloyd D."/>
            <person name="Kenyon E."/>
            <person name="Donaldson S."/>
            <person name="Sehra H."/>
            <person name="Almeida-King J."/>
            <person name="Loveland J."/>
            <person name="Trevanion S."/>
            <person name="Jones M."/>
            <person name="Quail M."/>
            <person name="Willey D."/>
            <person name="Hunt A."/>
            <person name="Burton J."/>
            <person name="Sims S."/>
            <person name="McLay K."/>
            <person name="Plumb B."/>
            <person name="Davis J."/>
            <person name="Clee C."/>
            <person name="Oliver K."/>
            <person name="Clark R."/>
            <person name="Riddle C."/>
            <person name="Elliot D."/>
            <person name="Threadgold G."/>
            <person name="Harden G."/>
            <person name="Ware D."/>
            <person name="Begum S."/>
            <person name="Mortimore B."/>
            <person name="Kerry G."/>
            <person name="Heath P."/>
            <person name="Phillimore B."/>
            <person name="Tracey A."/>
            <person name="Corby N."/>
            <person name="Dunn M."/>
            <person name="Johnson C."/>
            <person name="Wood J."/>
            <person name="Clark S."/>
            <person name="Pelan S."/>
            <person name="Griffiths G."/>
            <person name="Smith M."/>
            <person name="Glithero R."/>
            <person name="Howden P."/>
            <person name="Barker N."/>
            <person name="Lloyd C."/>
            <person name="Stevens C."/>
            <person name="Harley J."/>
            <person name="Holt K."/>
            <person name="Panagiotidis G."/>
            <person name="Lovell J."/>
            <person name="Beasley H."/>
            <person name="Henderson C."/>
            <person name="Gordon D."/>
            <person name="Auger K."/>
            <person name="Wright D."/>
            <person name="Collins J."/>
            <person name="Raisen C."/>
            <person name="Dyer L."/>
            <person name="Leung K."/>
            <person name="Robertson L."/>
            <person name="Ambridge K."/>
            <person name="Leongamornlert D."/>
            <person name="McGuire S."/>
            <person name="Gilderthorp R."/>
            <person name="Griffiths C."/>
            <person name="Manthravadi D."/>
            <person name="Nichol S."/>
            <person name="Barker G."/>
            <person name="Whitehead S."/>
            <person name="Kay M."/>
            <person name="Brown J."/>
            <person name="Murnane C."/>
            <person name="Gray E."/>
            <person name="Humphries M."/>
            <person name="Sycamore N."/>
            <person name="Barker D."/>
            <person name="Saunders D."/>
            <person name="Wallis J."/>
            <person name="Babbage A."/>
            <person name="Hammond S."/>
            <person name="Mashreghi-Mohammadi M."/>
            <person name="Barr L."/>
            <person name="Martin S."/>
            <person name="Wray P."/>
            <person name="Ellington A."/>
            <person name="Matthews N."/>
            <person name="Ellwood M."/>
            <person name="Woodmansey R."/>
            <person name="Clark G."/>
            <person name="Cooper J."/>
            <person name="Tromans A."/>
            <person name="Grafham D."/>
            <person name="Skuce C."/>
            <person name="Pandian R."/>
            <person name="Andrews R."/>
            <person name="Harrison E."/>
            <person name="Kimberley A."/>
            <person name="Garnett J."/>
            <person name="Fosker N."/>
            <person name="Hall R."/>
            <person name="Garner P."/>
            <person name="Kelly D."/>
            <person name="Bird C."/>
            <person name="Palmer S."/>
            <person name="Gehring I."/>
            <person name="Berger A."/>
            <person name="Dooley C.M."/>
            <person name="Ersan-Urun Z."/>
            <person name="Eser C."/>
            <person name="Geiger H."/>
            <person name="Geisler M."/>
            <person name="Karotki L."/>
            <person name="Kirn A."/>
            <person name="Konantz J."/>
            <person name="Konantz M."/>
            <person name="Oberlander M."/>
            <person name="Rudolph-Geiger S."/>
            <person name="Teucke M."/>
            <person name="Lanz C."/>
            <person name="Raddatz G."/>
            <person name="Osoegawa K."/>
            <person name="Zhu B."/>
            <person name="Rapp A."/>
            <person name="Widaa S."/>
            <person name="Langford C."/>
            <person name="Yang F."/>
            <person name="Schuster S.C."/>
            <person name="Carter N.P."/>
            <person name="Harrow J."/>
            <person name="Ning Z."/>
            <person name="Herrero J."/>
            <person name="Searle S.M."/>
            <person name="Enright A."/>
            <person name="Geisler R."/>
            <person name="Plasterk R.H."/>
            <person name="Lee C."/>
            <person name="Westerfield M."/>
            <person name="de Jong P.J."/>
            <person name="Zon L.I."/>
            <person name="Postlethwait J.H."/>
            <person name="Nusslein-Volhard C."/>
            <person name="Hubbard T.J."/>
            <person name="Roest Crollius H."/>
            <person name="Rogers J."/>
            <person name="Stemple D.L."/>
        </authorList>
    </citation>
    <scope>NUCLEOTIDE SEQUENCE [LARGE SCALE GENOMIC DNA]</scope>
    <source>
        <strain>Tuebingen</strain>
    </source>
</reference>
<reference key="2">
    <citation type="submission" date="2006-09" db="EMBL/GenBank/DDBJ databases">
        <authorList>
            <consortium name="NIH - Zebrafish Gene Collection (ZGC) project"/>
        </authorList>
    </citation>
    <scope>NUCLEOTIDE SEQUENCE [LARGE SCALE MRNA]</scope>
    <source>
        <strain>AB</strain>
        <tissue evidence="8">Embryo</tissue>
    </source>
</reference>
<reference key="3">
    <citation type="journal article" date="2016" name="Biochem. Biophys. Res. Commun.">
        <title>Protein palmitoylation activate zygotic gene expression during the maternal-to-zygotic transition.</title>
        <authorList>
            <person name="Du Z."/>
            <person name="Chen X."/>
            <person name="Li X."/>
            <person name="He K."/>
            <person name="Ji S."/>
            <person name="Shi W."/>
            <person name="Hao A."/>
        </authorList>
    </citation>
    <scope>DEVELOPMENTAL STAGE</scope>
</reference>
<keyword id="KW-0012">Acyltransferase</keyword>
<keyword id="KW-0333">Golgi apparatus</keyword>
<keyword id="KW-0449">Lipoprotein</keyword>
<keyword id="KW-0472">Membrane</keyword>
<keyword id="KW-0564">Palmitate</keyword>
<keyword id="KW-0597">Phosphoprotein</keyword>
<keyword id="KW-1185">Reference proteome</keyword>
<keyword id="KW-0808">Transferase</keyword>
<keyword id="KW-0812">Transmembrane</keyword>
<keyword id="KW-1133">Transmembrane helix</keyword>
<proteinExistence type="evidence at transcript level"/>
<organism>
    <name type="scientific">Danio rerio</name>
    <name type="common">Zebrafish</name>
    <name type="synonym">Brachydanio rerio</name>
    <dbReference type="NCBI Taxonomy" id="7955"/>
    <lineage>
        <taxon>Eukaryota</taxon>
        <taxon>Metazoa</taxon>
        <taxon>Chordata</taxon>
        <taxon>Craniata</taxon>
        <taxon>Vertebrata</taxon>
        <taxon>Euteleostomi</taxon>
        <taxon>Actinopterygii</taxon>
        <taxon>Neopterygii</taxon>
        <taxon>Teleostei</taxon>
        <taxon>Ostariophysi</taxon>
        <taxon>Cypriniformes</taxon>
        <taxon>Danionidae</taxon>
        <taxon>Danioninae</taxon>
        <taxon>Danio</taxon>
    </lineage>
</organism>
<accession>E7FH11</accession>
<accession>F1Q6I2</accession>
<accession>Q08C71</accession>
<comment type="function">
    <text evidence="2">Palmitoyltransferase that catalyzes the addition of palmitate onto various protein substrates, such as CGAS, HRAS and LCK.</text>
</comment>
<comment type="catalytic activity">
    <reaction evidence="2">
        <text>L-cysteinyl-[protein] + hexadecanoyl-CoA = S-hexadecanoyl-L-cysteinyl-[protein] + CoA</text>
        <dbReference type="Rhea" id="RHEA:36683"/>
        <dbReference type="Rhea" id="RHEA-COMP:10131"/>
        <dbReference type="Rhea" id="RHEA-COMP:11032"/>
        <dbReference type="ChEBI" id="CHEBI:29950"/>
        <dbReference type="ChEBI" id="CHEBI:57287"/>
        <dbReference type="ChEBI" id="CHEBI:57379"/>
        <dbReference type="ChEBI" id="CHEBI:74151"/>
        <dbReference type="EC" id="2.3.1.225"/>
    </reaction>
    <physiologicalReaction direction="left-to-right" evidence="2">
        <dbReference type="Rhea" id="RHEA:36684"/>
    </physiologicalReaction>
</comment>
<comment type="subcellular location">
    <subcellularLocation>
        <location evidence="2">Golgi apparatus membrane</location>
        <topology evidence="3">Multi-pass membrane protein</topology>
    </subcellularLocation>
</comment>
<comment type="developmental stage">
    <text evidence="5">Probably maternally supplied, the zygotic expression becomes significant at 4 hpf.</text>
</comment>
<comment type="domain">
    <text evidence="1">The DHHC domain is required for palmitoyltransferase activity.</text>
</comment>
<comment type="similarity">
    <text evidence="7">Belongs to the DHHC palmitoyltransferase family. ERF2/ZDHHC9 subfamily.</text>
</comment>
<protein>
    <recommendedName>
        <fullName evidence="7">Palmitoyltransferase ZDHHC18-A</fullName>
        <ecNumber evidence="2">2.3.1.225</ecNumber>
    </recommendedName>
    <alternativeName>
        <fullName evidence="6 9">Zinc finger DHHC domain-containing protein 18-A</fullName>
    </alternativeName>
</protein>
<evidence type="ECO:0000250" key="1">
    <source>
        <dbReference type="UniProtKB" id="Q8IUH5"/>
    </source>
</evidence>
<evidence type="ECO:0000250" key="2">
    <source>
        <dbReference type="UniProtKB" id="Q9NUE0"/>
    </source>
</evidence>
<evidence type="ECO:0000255" key="3"/>
<evidence type="ECO:0000255" key="4">
    <source>
        <dbReference type="PROSITE-ProRule" id="PRU00067"/>
    </source>
</evidence>
<evidence type="ECO:0000269" key="5">
    <source>
    </source>
</evidence>
<evidence type="ECO:0000303" key="6">
    <source>
    </source>
</evidence>
<evidence type="ECO:0000305" key="7"/>
<evidence type="ECO:0000312" key="8">
    <source>
        <dbReference type="EMBL" id="AAI24361.1"/>
    </source>
</evidence>
<evidence type="ECO:0000312" key="9">
    <source>
        <dbReference type="ZFIN" id="ZDB-GENE-060929-424"/>
    </source>
</evidence>
<feature type="chain" id="PRO_0000451102" description="Palmitoyltransferase ZDHHC18-A">
    <location>
        <begin position="1"/>
        <end position="467"/>
    </location>
</feature>
<feature type="topological domain" description="Cytoplasmic" evidence="7">
    <location>
        <begin position="1"/>
        <end position="59"/>
    </location>
</feature>
<feature type="transmembrane region" description="Helical" evidence="3">
    <location>
        <begin position="60"/>
        <end position="80"/>
    </location>
</feature>
<feature type="topological domain" description="Lumenal" evidence="7">
    <location>
        <begin position="81"/>
        <end position="88"/>
    </location>
</feature>
<feature type="transmembrane region" description="Helical" evidence="3">
    <location>
        <begin position="89"/>
        <end position="109"/>
    </location>
</feature>
<feature type="topological domain" description="Cytoplasmic" evidence="7">
    <location>
        <begin position="110"/>
        <end position="204"/>
    </location>
</feature>
<feature type="transmembrane region" description="Helical" evidence="3">
    <location>
        <begin position="205"/>
        <end position="225"/>
    </location>
</feature>
<feature type="topological domain" description="Lumenal" evidence="7">
    <location>
        <begin position="226"/>
        <end position="247"/>
    </location>
</feature>
<feature type="transmembrane region" description="Helical" evidence="3">
    <location>
        <begin position="248"/>
        <end position="268"/>
    </location>
</feature>
<feature type="topological domain" description="Cytoplasmic" evidence="7">
    <location>
        <begin position="269"/>
        <end position="467"/>
    </location>
</feature>
<feature type="domain" description="DHHC" evidence="4">
    <location>
        <begin position="161"/>
        <end position="211"/>
    </location>
</feature>
<feature type="active site" description="S-palmitoyl cysteine intermediate" evidence="4">
    <location>
        <position position="191"/>
    </location>
</feature>
<feature type="sequence conflict" description="In Ref. 2; AAI24361." evidence="7" ref="2">
    <original>K</original>
    <variation>R</variation>
    <location>
        <position position="167"/>
    </location>
</feature>
<feature type="sequence conflict" description="In Ref. 2; AAI24361." evidence="7" ref="2">
    <original>D</original>
    <variation>V</variation>
    <location>
        <position position="339"/>
    </location>
</feature>
<sequence>MKNCEYQQIDPRALRTPSSRTSSTLPCGRKGSQRLRRKWEVFPGKNRFYCDGRIMLARQCGVLPLTIGLIFITSVLFFTFDCPFLVDHLTVFIPVIGGVLFIFVVISLLQTSFTDPGILPRALPDEAADIEKQIDNSGSSTYRPPPRTKEILINDQVVKLKYCFTCKMFRPPRTSHCSLCDNCVERFDHHCPWVGNCVGKRNYRFFYAFIVSLSFLTSFIFGCVITHLTLRSQGGNGFIQAIQDSPASVVELVICFFSIWSILGLSGFHTYLVASNLTTNEDIKGSWSSKRGEESGNPYTYNNIFTNCCVVLCGPMPPSLIDRRGFVPPEDAPQTVTSDAELPAFMAKNDTNMCAQGTKELLESMANSTVIQSTCAPGKPKTAPVTQESLLNTVSITVSPPSKPPSNGCSGRQARRPIDVPCSQRGLKRAALHTHKPMLRLPSPLYSLSDSPLILSDAPDMGFIPLN</sequence>